<dbReference type="EC" id="1.3.1.9" evidence="1"/>
<dbReference type="EMBL" id="AM286415">
    <property type="protein sequence ID" value="CAL14195.1"/>
    <property type="molecule type" value="Genomic_DNA"/>
</dbReference>
<dbReference type="RefSeq" id="WP_011817460.1">
    <property type="nucleotide sequence ID" value="NC_008800.1"/>
</dbReference>
<dbReference type="RefSeq" id="YP_001008313.1">
    <property type="nucleotide sequence ID" value="NC_008800.1"/>
</dbReference>
<dbReference type="SMR" id="A1JT88"/>
<dbReference type="KEGG" id="yen:YE4179"/>
<dbReference type="PATRIC" id="fig|393305.7.peg.4447"/>
<dbReference type="eggNOG" id="COG3007">
    <property type="taxonomic scope" value="Bacteria"/>
</dbReference>
<dbReference type="HOGENOM" id="CLU_057698_1_0_6"/>
<dbReference type="OrthoDB" id="9802260at2"/>
<dbReference type="UniPathway" id="UPA00094"/>
<dbReference type="Proteomes" id="UP000000642">
    <property type="component" value="Chromosome"/>
</dbReference>
<dbReference type="GO" id="GO:0004318">
    <property type="term" value="F:enoyl-[acyl-carrier-protein] reductase (NADH) activity"/>
    <property type="evidence" value="ECO:0007669"/>
    <property type="project" value="UniProtKB-UniRule"/>
</dbReference>
<dbReference type="GO" id="GO:0051287">
    <property type="term" value="F:NAD binding"/>
    <property type="evidence" value="ECO:0007669"/>
    <property type="project" value="UniProtKB-UniRule"/>
</dbReference>
<dbReference type="GO" id="GO:0050343">
    <property type="term" value="F:trans-2-enoyl-CoA reductase (NADH) activity"/>
    <property type="evidence" value="ECO:0007669"/>
    <property type="project" value="TreeGrafter"/>
</dbReference>
<dbReference type="GO" id="GO:0006633">
    <property type="term" value="P:fatty acid biosynthetic process"/>
    <property type="evidence" value="ECO:0007669"/>
    <property type="project" value="UniProtKB-UniRule"/>
</dbReference>
<dbReference type="FunFam" id="3.40.50.720:FF:000221">
    <property type="entry name" value="Enoyl-[acyl-carrier-protein] reductase [NADH]"/>
    <property type="match status" value="1"/>
</dbReference>
<dbReference type="Gene3D" id="3.40.50.720">
    <property type="entry name" value="NAD(P)-binding Rossmann-like Domain"/>
    <property type="match status" value="1"/>
</dbReference>
<dbReference type="HAMAP" id="MF_01838">
    <property type="entry name" value="FabV_reductase"/>
    <property type="match status" value="1"/>
</dbReference>
<dbReference type="InterPro" id="IPR024906">
    <property type="entry name" value="Eno_Rdtase_FAD-bd_dom"/>
</dbReference>
<dbReference type="InterPro" id="IPR024910">
    <property type="entry name" value="Enoyl-CoA_Rdtase_cat_dom"/>
</dbReference>
<dbReference type="InterPro" id="IPR050048">
    <property type="entry name" value="FabV-like_NADH_b"/>
</dbReference>
<dbReference type="InterPro" id="IPR010758">
    <property type="entry name" value="Trans-2-enoyl-CoA_reductase"/>
</dbReference>
<dbReference type="NCBIfam" id="NF043048">
    <property type="entry name" value="EnoyACPredFabV"/>
    <property type="match status" value="1"/>
</dbReference>
<dbReference type="NCBIfam" id="NF010177">
    <property type="entry name" value="PRK13656.1"/>
    <property type="match status" value="1"/>
</dbReference>
<dbReference type="PANTHER" id="PTHR37480">
    <property type="entry name" value="ENOYL-[ACYL-CARRIER-PROTEIN] REDUCTASE [NADH]"/>
    <property type="match status" value="1"/>
</dbReference>
<dbReference type="PANTHER" id="PTHR37480:SF1">
    <property type="entry name" value="ENOYL-[ACYL-CARRIER-PROTEIN] REDUCTASE [NADH]"/>
    <property type="match status" value="1"/>
</dbReference>
<dbReference type="Pfam" id="PF07055">
    <property type="entry name" value="Eno-Rase_FAD_bd"/>
    <property type="match status" value="1"/>
</dbReference>
<dbReference type="Pfam" id="PF12242">
    <property type="entry name" value="Eno-Rase_NADH_b"/>
    <property type="match status" value="1"/>
</dbReference>
<dbReference type="Pfam" id="PF12241">
    <property type="entry name" value="Enoyl_reductase"/>
    <property type="match status" value="1"/>
</dbReference>
<accession>A1JT88</accession>
<name>FABV_YERE8</name>
<feature type="chain" id="PRO_1000070507" description="Enoyl-[acyl-carrier-protein] reductase [NADH]">
    <location>
        <begin position="1"/>
        <end position="399"/>
    </location>
</feature>
<feature type="active site" description="Proton donor" evidence="1">
    <location>
        <position position="235"/>
    </location>
</feature>
<feature type="binding site" evidence="1">
    <location>
        <begin position="48"/>
        <end position="53"/>
    </location>
    <ligand>
        <name>NAD(+)</name>
        <dbReference type="ChEBI" id="CHEBI:57540"/>
    </ligand>
</feature>
<feature type="binding site" evidence="1">
    <location>
        <begin position="74"/>
        <end position="75"/>
    </location>
    <ligand>
        <name>NAD(+)</name>
        <dbReference type="ChEBI" id="CHEBI:57540"/>
    </ligand>
</feature>
<feature type="binding site" evidence="1">
    <location>
        <begin position="111"/>
        <end position="112"/>
    </location>
    <ligand>
        <name>NAD(+)</name>
        <dbReference type="ChEBI" id="CHEBI:57540"/>
    </ligand>
</feature>
<feature type="binding site" evidence="1">
    <location>
        <begin position="139"/>
        <end position="140"/>
    </location>
    <ligand>
        <name>NAD(+)</name>
        <dbReference type="ChEBI" id="CHEBI:57540"/>
    </ligand>
</feature>
<feature type="binding site" evidence="1">
    <location>
        <position position="225"/>
    </location>
    <ligand>
        <name>substrate</name>
    </ligand>
</feature>
<feature type="binding site" evidence="1">
    <location>
        <position position="244"/>
    </location>
    <ligand>
        <name>NAD(+)</name>
        <dbReference type="ChEBI" id="CHEBI:57540"/>
    </ligand>
</feature>
<feature type="binding site" evidence="1">
    <location>
        <begin position="274"/>
        <end position="276"/>
    </location>
    <ligand>
        <name>NAD(+)</name>
        <dbReference type="ChEBI" id="CHEBI:57540"/>
    </ligand>
</feature>
<feature type="site" description="Plays an important role in discriminating NADH against NADPH" evidence="1">
    <location>
        <position position="75"/>
    </location>
</feature>
<sequence>MIIKPRVRGFICVTAHPAGCEANVKKQIDYVTAEGPIANGPKRVLVIGASTGYGLAARITAAFGCGADTLGVFFERPGEEGKPGTSGWYNSAAFHKFAEQKGLYAKSINGDAFSDEIKRLTIEAIKQDLGQVDQVIYSLASPRRTHPKTGEVFNSTLKPIGHEVKFRGLDTDKEVIKEAVLQPATQEEIDNTVAVMGGEDWQMWIDALLEAGVLAEGAQTTAFTYLGEKITHDIYWNGSIGAAKKDLDQKVLAIRDSLSAHGGGDARVSVLKAVVTQASSAIPMMPLYLSLLFKVMKEKGTHEGCIEQVYSLYKDSLCGSAPHMDQDGRLRADYKELDPEVQNQVQQLWDQVTNDNIYQLTDFTGYKTEFLNLFGFAIDGVDYEADVNPAVKIPNLIQG</sequence>
<protein>
    <recommendedName>
        <fullName evidence="1">Enoyl-[acyl-carrier-protein] reductase [NADH]</fullName>
        <shortName evidence="1">ENR</shortName>
        <ecNumber evidence="1">1.3.1.9</ecNumber>
    </recommendedName>
</protein>
<organism>
    <name type="scientific">Yersinia enterocolitica serotype O:8 / biotype 1B (strain NCTC 13174 / 8081)</name>
    <dbReference type="NCBI Taxonomy" id="393305"/>
    <lineage>
        <taxon>Bacteria</taxon>
        <taxon>Pseudomonadati</taxon>
        <taxon>Pseudomonadota</taxon>
        <taxon>Gammaproteobacteria</taxon>
        <taxon>Enterobacterales</taxon>
        <taxon>Yersiniaceae</taxon>
        <taxon>Yersinia</taxon>
    </lineage>
</organism>
<keyword id="KW-0275">Fatty acid biosynthesis</keyword>
<keyword id="KW-0276">Fatty acid metabolism</keyword>
<keyword id="KW-0444">Lipid biosynthesis</keyword>
<keyword id="KW-0443">Lipid metabolism</keyword>
<keyword id="KW-0520">NAD</keyword>
<keyword id="KW-0560">Oxidoreductase</keyword>
<proteinExistence type="inferred from homology"/>
<evidence type="ECO:0000255" key="1">
    <source>
        <dbReference type="HAMAP-Rule" id="MF_01838"/>
    </source>
</evidence>
<comment type="function">
    <text evidence="1">Involved in the final reduction of the elongation cycle of fatty acid synthesis (FAS II). Catalyzes the reduction of a carbon-carbon double bond in an enoyl moiety that is covalently linked to an acyl carrier protein (ACP).</text>
</comment>
<comment type="catalytic activity">
    <reaction evidence="1">
        <text>a 2,3-saturated acyl-[ACP] + NAD(+) = a (2E)-enoyl-[ACP] + NADH + H(+)</text>
        <dbReference type="Rhea" id="RHEA:10240"/>
        <dbReference type="Rhea" id="RHEA-COMP:9925"/>
        <dbReference type="Rhea" id="RHEA-COMP:9926"/>
        <dbReference type="ChEBI" id="CHEBI:15378"/>
        <dbReference type="ChEBI" id="CHEBI:57540"/>
        <dbReference type="ChEBI" id="CHEBI:57945"/>
        <dbReference type="ChEBI" id="CHEBI:78784"/>
        <dbReference type="ChEBI" id="CHEBI:78785"/>
        <dbReference type="EC" id="1.3.1.9"/>
    </reaction>
</comment>
<comment type="pathway">
    <text evidence="1">Lipid metabolism; fatty acid biosynthesis.</text>
</comment>
<comment type="subunit">
    <text evidence="1">Monomer.</text>
</comment>
<comment type="similarity">
    <text evidence="1">Belongs to the TER reductase family.</text>
</comment>
<reference key="1">
    <citation type="journal article" date="2006" name="PLoS Genet.">
        <title>The complete genome sequence and comparative genome analysis of the high pathogenicity Yersinia enterocolitica strain 8081.</title>
        <authorList>
            <person name="Thomson N.R."/>
            <person name="Howard S."/>
            <person name="Wren B.W."/>
            <person name="Holden M.T.G."/>
            <person name="Crossman L."/>
            <person name="Challis G.L."/>
            <person name="Churcher C."/>
            <person name="Mungall K."/>
            <person name="Brooks K."/>
            <person name="Chillingworth T."/>
            <person name="Feltwell T."/>
            <person name="Abdellah Z."/>
            <person name="Hauser H."/>
            <person name="Jagels K."/>
            <person name="Maddison M."/>
            <person name="Moule S."/>
            <person name="Sanders M."/>
            <person name="Whitehead S."/>
            <person name="Quail M.A."/>
            <person name="Dougan G."/>
            <person name="Parkhill J."/>
            <person name="Prentice M.B."/>
        </authorList>
    </citation>
    <scope>NUCLEOTIDE SEQUENCE [LARGE SCALE GENOMIC DNA]</scope>
    <source>
        <strain>NCTC 13174 / 8081</strain>
    </source>
</reference>
<gene>
    <name evidence="1" type="primary">fabV</name>
    <name type="ordered locus">YE4179</name>
</gene>